<accession>Q8K4Q7</accession>
<accession>Q52KP2</accession>
<comment type="function">
    <text evidence="1 5">Catalyzes specifically the phosphorylation of ceramide to form ceramide 1-phosphate (PubMed:16269826). Acts efficiently on natural and analog ceramides (C6, C8, C16 ceramides, and C8-dihydroceramide), to a lesser extent on C2-ceramide and C6-dihydroceramide, but not on other lipids, such as various sphingosines (PubMed:16269826). Shows a greater preference for D-erythro isomer of ceramides (By similarity). Binds phosphoinositides (By similarity).</text>
</comment>
<comment type="catalytic activity">
    <reaction evidence="5">
        <text>an N-acylsphing-4-enine + ATP = an N-acylsphing-4-enine 1-phosphate + ADP + H(+)</text>
        <dbReference type="Rhea" id="RHEA:17929"/>
        <dbReference type="ChEBI" id="CHEBI:15378"/>
        <dbReference type="ChEBI" id="CHEBI:30616"/>
        <dbReference type="ChEBI" id="CHEBI:52639"/>
        <dbReference type="ChEBI" id="CHEBI:57674"/>
        <dbReference type="ChEBI" id="CHEBI:456216"/>
        <dbReference type="EC" id="2.7.1.138"/>
    </reaction>
    <physiologicalReaction direction="left-to-right" evidence="7">
        <dbReference type="Rhea" id="RHEA:17930"/>
    </physiologicalReaction>
</comment>
<comment type="catalytic activity">
    <reaction evidence="1">
        <text>N-(hexanoyl)sphing-4-enine + ATP = N-hexanoylsphing-4-enine 1-phosphate + ADP + H(+)</text>
        <dbReference type="Rhea" id="RHEA:43312"/>
        <dbReference type="ChEBI" id="CHEBI:15378"/>
        <dbReference type="ChEBI" id="CHEBI:30616"/>
        <dbReference type="ChEBI" id="CHEBI:63867"/>
        <dbReference type="ChEBI" id="CHEBI:82959"/>
        <dbReference type="ChEBI" id="CHEBI:456216"/>
    </reaction>
    <physiologicalReaction direction="left-to-right" evidence="1">
        <dbReference type="Rhea" id="RHEA:43313"/>
    </physiologicalReaction>
</comment>
<comment type="catalytic activity">
    <reaction evidence="1">
        <text>N-(acetyl)-sphing-4-enine + ATP = N-(acetyl)-sphing-4-enine-1-phosphate + ADP + H(+)</text>
        <dbReference type="Rhea" id="RHEA:47904"/>
        <dbReference type="ChEBI" id="CHEBI:15378"/>
        <dbReference type="ChEBI" id="CHEBI:30616"/>
        <dbReference type="ChEBI" id="CHEBI:46979"/>
        <dbReference type="ChEBI" id="CHEBI:85375"/>
        <dbReference type="ChEBI" id="CHEBI:456216"/>
    </reaction>
    <physiologicalReaction direction="left-to-right" evidence="1">
        <dbReference type="Rhea" id="RHEA:47905"/>
    </physiologicalReaction>
</comment>
<comment type="catalytic activity">
    <reaction evidence="1">
        <text>N-hexadecanoylsphing-4-enine + ATP = N-(hexadecanoyl)-sphing-4-enine-1-phosphate + ADP + H(+)</text>
        <dbReference type="Rhea" id="RHEA:46340"/>
        <dbReference type="ChEBI" id="CHEBI:15378"/>
        <dbReference type="ChEBI" id="CHEBI:30616"/>
        <dbReference type="ChEBI" id="CHEBI:72959"/>
        <dbReference type="ChEBI" id="CHEBI:72963"/>
        <dbReference type="ChEBI" id="CHEBI:456216"/>
    </reaction>
    <physiologicalReaction direction="left-to-right" evidence="1">
        <dbReference type="Rhea" id="RHEA:46341"/>
    </physiologicalReaction>
</comment>
<comment type="catalytic activity">
    <reaction evidence="1">
        <text>N-hexanoyl-(4R)-hydroxysphinganine + ATP = N-hexanoyl-(4R)-hydroxysphinganine-1-phosphate + ADP + H(+)</text>
        <dbReference type="Rhea" id="RHEA:47916"/>
        <dbReference type="ChEBI" id="CHEBI:15378"/>
        <dbReference type="ChEBI" id="CHEBI:30616"/>
        <dbReference type="ChEBI" id="CHEBI:88095"/>
        <dbReference type="ChEBI" id="CHEBI:88096"/>
        <dbReference type="ChEBI" id="CHEBI:456216"/>
    </reaction>
    <physiologicalReaction direction="left-to-right" evidence="1">
        <dbReference type="Rhea" id="RHEA:47917"/>
    </physiologicalReaction>
</comment>
<comment type="cofactor">
    <cofactor evidence="1">
        <name>Ca(2+)</name>
        <dbReference type="ChEBI" id="CHEBI:29108"/>
    </cofactor>
    <cofactor evidence="1">
        <name>Mg(2+)</name>
        <dbReference type="ChEBI" id="CHEBI:18420"/>
    </cofactor>
</comment>
<comment type="subcellular location">
    <subcellularLocation>
        <location evidence="1">Cytoplasm</location>
    </subcellularLocation>
    <subcellularLocation>
        <location evidence="1">Cell membrane</location>
        <topology evidence="1">Peripheral membrane protein</topology>
    </subcellularLocation>
</comment>
<comment type="tissue specificity">
    <text evidence="4 5">High level expression in heart, brain, testis and pancreas; low expression in spleen, liver and lung; not detected in skeletal muscle.</text>
</comment>
<comment type="developmental stage">
    <text evidence="4">Highly expressed at 7 dpc and decreases rapidly thereafter.</text>
</comment>
<protein>
    <recommendedName>
        <fullName>Ceramide kinase</fullName>
        <shortName>mCERK</shortName>
        <ecNumber evidence="5">2.7.1.138</ecNumber>
    </recommendedName>
    <alternativeName>
        <fullName>Acylsphingosine kinase</fullName>
    </alternativeName>
</protein>
<keyword id="KW-0067">ATP-binding</keyword>
<keyword id="KW-0106">Calcium</keyword>
<keyword id="KW-1003">Cell membrane</keyword>
<keyword id="KW-0963">Cytoplasm</keyword>
<keyword id="KW-0418">Kinase</keyword>
<keyword id="KW-0443">Lipid metabolism</keyword>
<keyword id="KW-0460">Magnesium</keyword>
<keyword id="KW-0472">Membrane</keyword>
<keyword id="KW-0547">Nucleotide-binding</keyword>
<keyword id="KW-0597">Phosphoprotein</keyword>
<keyword id="KW-1185">Reference proteome</keyword>
<keyword id="KW-0808">Transferase</keyword>
<evidence type="ECO:0000250" key="1">
    <source>
        <dbReference type="UniProtKB" id="Q8TCT0"/>
    </source>
</evidence>
<evidence type="ECO:0000250" key="2">
    <source>
        <dbReference type="UniProtKB" id="Q9NYA1"/>
    </source>
</evidence>
<evidence type="ECO:0000255" key="3">
    <source>
        <dbReference type="PROSITE-ProRule" id="PRU00783"/>
    </source>
</evidence>
<evidence type="ECO:0000269" key="4">
    <source>
    </source>
</evidence>
<evidence type="ECO:0000269" key="5">
    <source>
    </source>
</evidence>
<evidence type="ECO:0000305" key="6"/>
<evidence type="ECO:0000305" key="7">
    <source>
    </source>
</evidence>
<organism>
    <name type="scientific">Mus musculus</name>
    <name type="common">Mouse</name>
    <dbReference type="NCBI Taxonomy" id="10090"/>
    <lineage>
        <taxon>Eukaryota</taxon>
        <taxon>Metazoa</taxon>
        <taxon>Chordata</taxon>
        <taxon>Craniata</taxon>
        <taxon>Vertebrata</taxon>
        <taxon>Euteleostomi</taxon>
        <taxon>Mammalia</taxon>
        <taxon>Eutheria</taxon>
        <taxon>Euarchontoglires</taxon>
        <taxon>Glires</taxon>
        <taxon>Rodentia</taxon>
        <taxon>Myomorpha</taxon>
        <taxon>Muroidea</taxon>
        <taxon>Muridae</taxon>
        <taxon>Murinae</taxon>
        <taxon>Mus</taxon>
        <taxon>Mus</taxon>
    </lineage>
</organism>
<dbReference type="EC" id="2.7.1.138" evidence="5"/>
<dbReference type="EMBL" id="AB079067">
    <property type="protein sequence ID" value="BAC01155.1"/>
    <property type="molecule type" value="mRNA"/>
</dbReference>
<dbReference type="EMBL" id="AK042077">
    <property type="protein sequence ID" value="BAC31157.1"/>
    <property type="molecule type" value="mRNA"/>
</dbReference>
<dbReference type="EMBL" id="AK052269">
    <property type="protein sequence ID" value="BAC34908.1"/>
    <property type="molecule type" value="mRNA"/>
</dbReference>
<dbReference type="EMBL" id="AK169528">
    <property type="protein sequence ID" value="BAE41212.1"/>
    <property type="molecule type" value="mRNA"/>
</dbReference>
<dbReference type="EMBL" id="BC094253">
    <property type="protein sequence ID" value="AAH94253.1"/>
    <property type="molecule type" value="mRNA"/>
</dbReference>
<dbReference type="CCDS" id="CCDS27728.1"/>
<dbReference type="RefSeq" id="NP_663450.3">
    <property type="nucleotide sequence ID" value="NM_145475.4"/>
</dbReference>
<dbReference type="SMR" id="Q8K4Q7"/>
<dbReference type="BioGRID" id="230189">
    <property type="interactions" value="2"/>
</dbReference>
<dbReference type="FunCoup" id="Q8K4Q7">
    <property type="interactions" value="2000"/>
</dbReference>
<dbReference type="STRING" id="10090.ENSMUSP00000038203"/>
<dbReference type="PhosphoSitePlus" id="Q8K4Q7"/>
<dbReference type="SwissPalm" id="Q8K4Q7"/>
<dbReference type="PaxDb" id="10090-ENSMUSP00000038203"/>
<dbReference type="ProteomicsDB" id="281382"/>
<dbReference type="Antibodypedia" id="326">
    <property type="antibodies" value="309 antibodies from 30 providers"/>
</dbReference>
<dbReference type="DNASU" id="223753"/>
<dbReference type="Ensembl" id="ENSMUST00000044332.16">
    <property type="protein sequence ID" value="ENSMUSP00000038203.10"/>
    <property type="gene ID" value="ENSMUSG00000035891.17"/>
</dbReference>
<dbReference type="GeneID" id="223753"/>
<dbReference type="KEGG" id="mmu:223753"/>
<dbReference type="UCSC" id="uc007xdx.2">
    <property type="organism name" value="mouse"/>
</dbReference>
<dbReference type="AGR" id="MGI:2386052"/>
<dbReference type="CTD" id="64781"/>
<dbReference type="MGI" id="MGI:2386052">
    <property type="gene designation" value="Cerk"/>
</dbReference>
<dbReference type="VEuPathDB" id="HostDB:ENSMUSG00000035891"/>
<dbReference type="eggNOG" id="KOG1115">
    <property type="taxonomic scope" value="Eukaryota"/>
</dbReference>
<dbReference type="GeneTree" id="ENSGT00940000156976"/>
<dbReference type="HOGENOM" id="CLU_013399_2_2_1"/>
<dbReference type="InParanoid" id="Q8K4Q7"/>
<dbReference type="OMA" id="HHRWKWA"/>
<dbReference type="OrthoDB" id="530923at2759"/>
<dbReference type="PhylomeDB" id="Q8K4Q7"/>
<dbReference type="TreeFam" id="TF314514"/>
<dbReference type="BRENDA" id="2.7.1.138">
    <property type="organism ID" value="3474"/>
</dbReference>
<dbReference type="Reactome" id="R-MMU-9840309">
    <property type="pathway name" value="Glycosphingolipid biosynthesis"/>
</dbReference>
<dbReference type="BioGRID-ORCS" id="223753">
    <property type="hits" value="3 hits in 79 CRISPR screens"/>
</dbReference>
<dbReference type="ChiTaRS" id="Cerk">
    <property type="organism name" value="mouse"/>
</dbReference>
<dbReference type="PRO" id="PR:Q8K4Q7"/>
<dbReference type="Proteomes" id="UP000000589">
    <property type="component" value="Chromosome 15"/>
</dbReference>
<dbReference type="RNAct" id="Q8K4Q7">
    <property type="molecule type" value="protein"/>
</dbReference>
<dbReference type="Bgee" id="ENSMUSG00000035891">
    <property type="expression patterns" value="Expressed in cerebellum lobe and 223 other cell types or tissues"/>
</dbReference>
<dbReference type="ExpressionAtlas" id="Q8K4Q7">
    <property type="expression patterns" value="baseline and differential"/>
</dbReference>
<dbReference type="GO" id="GO:0016020">
    <property type="term" value="C:membrane"/>
    <property type="evidence" value="ECO:0000250"/>
    <property type="project" value="UniProtKB"/>
</dbReference>
<dbReference type="GO" id="GO:0005739">
    <property type="term" value="C:mitochondrion"/>
    <property type="evidence" value="ECO:0007005"/>
    <property type="project" value="MGI"/>
</dbReference>
<dbReference type="GO" id="GO:0005886">
    <property type="term" value="C:plasma membrane"/>
    <property type="evidence" value="ECO:0000250"/>
    <property type="project" value="UniProtKB"/>
</dbReference>
<dbReference type="GO" id="GO:0005524">
    <property type="term" value="F:ATP binding"/>
    <property type="evidence" value="ECO:0007669"/>
    <property type="project" value="UniProtKB-KW"/>
</dbReference>
<dbReference type="GO" id="GO:0001729">
    <property type="term" value="F:ceramide kinase activity"/>
    <property type="evidence" value="ECO:0000314"/>
    <property type="project" value="UniProtKB"/>
</dbReference>
<dbReference type="GO" id="GO:0000287">
    <property type="term" value="F:magnesium ion binding"/>
    <property type="evidence" value="ECO:0000250"/>
    <property type="project" value="UniProtKB"/>
</dbReference>
<dbReference type="GO" id="GO:0006672">
    <property type="term" value="P:ceramide metabolic process"/>
    <property type="evidence" value="ECO:0000250"/>
    <property type="project" value="UniProtKB"/>
</dbReference>
<dbReference type="FunFam" id="2.60.200.40:FF:000014">
    <property type="entry name" value="Ceramide kinase"/>
    <property type="match status" value="1"/>
</dbReference>
<dbReference type="FunFam" id="3.40.50.10330:FF:000022">
    <property type="entry name" value="Ceramide kinase"/>
    <property type="match status" value="1"/>
</dbReference>
<dbReference type="Gene3D" id="2.60.200.40">
    <property type="match status" value="1"/>
</dbReference>
<dbReference type="Gene3D" id="3.40.50.10330">
    <property type="entry name" value="Probable inorganic polyphosphate/atp-NAD kinase, domain 1"/>
    <property type="match status" value="1"/>
</dbReference>
<dbReference type="InterPro" id="IPR017438">
    <property type="entry name" value="ATP-NAD_kinase_N"/>
</dbReference>
<dbReference type="InterPro" id="IPR045363">
    <property type="entry name" value="CERK_C"/>
</dbReference>
<dbReference type="InterPro" id="IPR001206">
    <property type="entry name" value="Diacylglycerol_kinase_cat_dom"/>
</dbReference>
<dbReference type="InterPro" id="IPR050187">
    <property type="entry name" value="Lipid_Phosphate_FormReg"/>
</dbReference>
<dbReference type="InterPro" id="IPR016064">
    <property type="entry name" value="NAD/diacylglycerol_kinase_sf"/>
</dbReference>
<dbReference type="PANTHER" id="PTHR12358:SF25">
    <property type="entry name" value="CERAMIDE KINASE"/>
    <property type="match status" value="1"/>
</dbReference>
<dbReference type="PANTHER" id="PTHR12358">
    <property type="entry name" value="SPHINGOSINE KINASE"/>
    <property type="match status" value="1"/>
</dbReference>
<dbReference type="Pfam" id="PF19280">
    <property type="entry name" value="CERK_C"/>
    <property type="match status" value="1"/>
</dbReference>
<dbReference type="Pfam" id="PF00781">
    <property type="entry name" value="DAGK_cat"/>
    <property type="match status" value="1"/>
</dbReference>
<dbReference type="Pfam" id="PF25382">
    <property type="entry name" value="PH_CERK"/>
    <property type="match status" value="1"/>
</dbReference>
<dbReference type="SMART" id="SM00046">
    <property type="entry name" value="DAGKc"/>
    <property type="match status" value="1"/>
</dbReference>
<dbReference type="SUPFAM" id="SSF111331">
    <property type="entry name" value="NAD kinase/diacylglycerol kinase-like"/>
    <property type="match status" value="1"/>
</dbReference>
<dbReference type="PROSITE" id="PS50146">
    <property type="entry name" value="DAGK"/>
    <property type="match status" value="1"/>
</dbReference>
<gene>
    <name type="primary">Cerk</name>
</gene>
<name>CERK1_MOUSE</name>
<proteinExistence type="evidence at protein level"/>
<sequence>MGAMGAAEPLHSVLWVKRRRCAVSLEPARALLRWWRSPEPGPSAPGADARSVLVSEIIAVEEKDDCEKHASSGRWHKMENPFAFTVHRVKRVRHHRWKWARVTFWSADEQLCHLWLQTLRGLLESLTSRPKHLLVFINPFGGKGQGKRIYEKTVAPLFTLASITTEIIITEHANQAKETLYEINTDSYDGIVCVGGDGMFSEVLHGVIGRTQQSAGIDPNHPRAVLVPSTLRIGIIPAGSTDCVCYSTVGTNDAETSALHIIIGDSLAIDVSSVHYHNTLLRYSVSLLGYGFYGDLIKDSEKKRWMGLVRYDFSGLKTFLSHQYYEGTLSFLPAQHTVGSPRDNKPCRAGCFVCRQSKQQLEEEEKKALYGLENAEEMEEWQVTCGKFLAINATNMSCACPRSPGGLSPFAHLGDGSSDLILIRKCSRFNFLRFLIRHTNQEDQFDFTFVEVYRVKKFHFTSKHVEDEDNDSKEQEKQKFGKICKDRPSCTCSASRSSWNCDGEVMHSPAIEVRVHCQLVRLFARGIEEES</sequence>
<reference key="1">
    <citation type="journal article" date="2002" name="J. Biol. Chem.">
        <title>Ceramide kinase, a novel lipid kinase. Molecular cloning and functional characterization.</title>
        <authorList>
            <person name="Sugiura M."/>
            <person name="Kono K."/>
            <person name="Liu H."/>
            <person name="Shimizugawa T."/>
            <person name="Minekura H."/>
            <person name="Spiegel S."/>
            <person name="Kohama T."/>
        </authorList>
    </citation>
    <scope>NUCLEOTIDE SEQUENCE [MRNA]</scope>
    <scope>TISSUE SPECIFICITY</scope>
    <scope>DEVELOPMENTAL STAGE</scope>
    <source>
        <tissue>Brain</tissue>
    </source>
</reference>
<reference key="2">
    <citation type="journal article" date="2005" name="Science">
        <title>The transcriptional landscape of the mammalian genome.</title>
        <authorList>
            <person name="Carninci P."/>
            <person name="Kasukawa T."/>
            <person name="Katayama S."/>
            <person name="Gough J."/>
            <person name="Frith M.C."/>
            <person name="Maeda N."/>
            <person name="Oyama R."/>
            <person name="Ravasi T."/>
            <person name="Lenhard B."/>
            <person name="Wells C."/>
            <person name="Kodzius R."/>
            <person name="Shimokawa K."/>
            <person name="Bajic V.B."/>
            <person name="Brenner S.E."/>
            <person name="Batalov S."/>
            <person name="Forrest A.R."/>
            <person name="Zavolan M."/>
            <person name="Davis M.J."/>
            <person name="Wilming L.G."/>
            <person name="Aidinis V."/>
            <person name="Allen J.E."/>
            <person name="Ambesi-Impiombato A."/>
            <person name="Apweiler R."/>
            <person name="Aturaliya R.N."/>
            <person name="Bailey T.L."/>
            <person name="Bansal M."/>
            <person name="Baxter L."/>
            <person name="Beisel K.W."/>
            <person name="Bersano T."/>
            <person name="Bono H."/>
            <person name="Chalk A.M."/>
            <person name="Chiu K.P."/>
            <person name="Choudhary V."/>
            <person name="Christoffels A."/>
            <person name="Clutterbuck D.R."/>
            <person name="Crowe M.L."/>
            <person name="Dalla E."/>
            <person name="Dalrymple B.P."/>
            <person name="de Bono B."/>
            <person name="Della Gatta G."/>
            <person name="di Bernardo D."/>
            <person name="Down T."/>
            <person name="Engstrom P."/>
            <person name="Fagiolini M."/>
            <person name="Faulkner G."/>
            <person name="Fletcher C.F."/>
            <person name="Fukushima T."/>
            <person name="Furuno M."/>
            <person name="Futaki S."/>
            <person name="Gariboldi M."/>
            <person name="Georgii-Hemming P."/>
            <person name="Gingeras T.R."/>
            <person name="Gojobori T."/>
            <person name="Green R.E."/>
            <person name="Gustincich S."/>
            <person name="Harbers M."/>
            <person name="Hayashi Y."/>
            <person name="Hensch T.K."/>
            <person name="Hirokawa N."/>
            <person name="Hill D."/>
            <person name="Huminiecki L."/>
            <person name="Iacono M."/>
            <person name="Ikeo K."/>
            <person name="Iwama A."/>
            <person name="Ishikawa T."/>
            <person name="Jakt M."/>
            <person name="Kanapin A."/>
            <person name="Katoh M."/>
            <person name="Kawasawa Y."/>
            <person name="Kelso J."/>
            <person name="Kitamura H."/>
            <person name="Kitano H."/>
            <person name="Kollias G."/>
            <person name="Krishnan S.P."/>
            <person name="Kruger A."/>
            <person name="Kummerfeld S.K."/>
            <person name="Kurochkin I.V."/>
            <person name="Lareau L.F."/>
            <person name="Lazarevic D."/>
            <person name="Lipovich L."/>
            <person name="Liu J."/>
            <person name="Liuni S."/>
            <person name="McWilliam S."/>
            <person name="Madan Babu M."/>
            <person name="Madera M."/>
            <person name="Marchionni L."/>
            <person name="Matsuda H."/>
            <person name="Matsuzawa S."/>
            <person name="Miki H."/>
            <person name="Mignone F."/>
            <person name="Miyake S."/>
            <person name="Morris K."/>
            <person name="Mottagui-Tabar S."/>
            <person name="Mulder N."/>
            <person name="Nakano N."/>
            <person name="Nakauchi H."/>
            <person name="Ng P."/>
            <person name="Nilsson R."/>
            <person name="Nishiguchi S."/>
            <person name="Nishikawa S."/>
            <person name="Nori F."/>
            <person name="Ohara O."/>
            <person name="Okazaki Y."/>
            <person name="Orlando V."/>
            <person name="Pang K.C."/>
            <person name="Pavan W.J."/>
            <person name="Pavesi G."/>
            <person name="Pesole G."/>
            <person name="Petrovsky N."/>
            <person name="Piazza S."/>
            <person name="Reed J."/>
            <person name="Reid J.F."/>
            <person name="Ring B.Z."/>
            <person name="Ringwald M."/>
            <person name="Rost B."/>
            <person name="Ruan Y."/>
            <person name="Salzberg S.L."/>
            <person name="Sandelin A."/>
            <person name="Schneider C."/>
            <person name="Schoenbach C."/>
            <person name="Sekiguchi K."/>
            <person name="Semple C.A."/>
            <person name="Seno S."/>
            <person name="Sessa L."/>
            <person name="Sheng Y."/>
            <person name="Shibata Y."/>
            <person name="Shimada H."/>
            <person name="Shimada K."/>
            <person name="Silva D."/>
            <person name="Sinclair B."/>
            <person name="Sperling S."/>
            <person name="Stupka E."/>
            <person name="Sugiura K."/>
            <person name="Sultana R."/>
            <person name="Takenaka Y."/>
            <person name="Taki K."/>
            <person name="Tammoja K."/>
            <person name="Tan S.L."/>
            <person name="Tang S."/>
            <person name="Taylor M.S."/>
            <person name="Tegner J."/>
            <person name="Teichmann S.A."/>
            <person name="Ueda H.R."/>
            <person name="van Nimwegen E."/>
            <person name="Verardo R."/>
            <person name="Wei C.L."/>
            <person name="Yagi K."/>
            <person name="Yamanishi H."/>
            <person name="Zabarovsky E."/>
            <person name="Zhu S."/>
            <person name="Zimmer A."/>
            <person name="Hide W."/>
            <person name="Bult C."/>
            <person name="Grimmond S.M."/>
            <person name="Teasdale R.D."/>
            <person name="Liu E.T."/>
            <person name="Brusic V."/>
            <person name="Quackenbush J."/>
            <person name="Wahlestedt C."/>
            <person name="Mattick J.S."/>
            <person name="Hume D.A."/>
            <person name="Kai C."/>
            <person name="Sasaki D."/>
            <person name="Tomaru Y."/>
            <person name="Fukuda S."/>
            <person name="Kanamori-Katayama M."/>
            <person name="Suzuki M."/>
            <person name="Aoki J."/>
            <person name="Arakawa T."/>
            <person name="Iida J."/>
            <person name="Imamura K."/>
            <person name="Itoh M."/>
            <person name="Kato T."/>
            <person name="Kawaji H."/>
            <person name="Kawagashira N."/>
            <person name="Kawashima T."/>
            <person name="Kojima M."/>
            <person name="Kondo S."/>
            <person name="Konno H."/>
            <person name="Nakano K."/>
            <person name="Ninomiya N."/>
            <person name="Nishio T."/>
            <person name="Okada M."/>
            <person name="Plessy C."/>
            <person name="Shibata K."/>
            <person name="Shiraki T."/>
            <person name="Suzuki S."/>
            <person name="Tagami M."/>
            <person name="Waki K."/>
            <person name="Watahiki A."/>
            <person name="Okamura-Oho Y."/>
            <person name="Suzuki H."/>
            <person name="Kawai J."/>
            <person name="Hayashizaki Y."/>
        </authorList>
    </citation>
    <scope>NUCLEOTIDE SEQUENCE [LARGE SCALE MRNA]</scope>
    <source>
        <strain>C57BL/6J</strain>
        <tissue>Heart</tissue>
        <tissue>Thymus</tissue>
    </source>
</reference>
<reference key="3">
    <citation type="journal article" date="2004" name="Genome Res.">
        <title>The status, quality, and expansion of the NIH full-length cDNA project: the Mammalian Gene Collection (MGC).</title>
        <authorList>
            <consortium name="The MGC Project Team"/>
        </authorList>
    </citation>
    <scope>NUCLEOTIDE SEQUENCE [LARGE SCALE MRNA]</scope>
    <source>
        <strain>C57BL/6J</strain>
        <tissue>Brain</tissue>
    </source>
</reference>
<reference key="4">
    <citation type="journal article" date="2006" name="J. Lipid Res.">
        <title>Further characterization of mammalian ceramide kinase: substrate delivery and (stereo)specificity, tissue distribution, and subcellular localization studies.</title>
        <authorList>
            <person name="Van Overloop H."/>
            <person name="Gijsbers S."/>
            <person name="Van Veldhoven P.P."/>
        </authorList>
    </citation>
    <scope>FUNCTION</scope>
    <scope>CATALYTIC ACTIVITY</scope>
    <scope>TISSUE SPECIFICITY</scope>
</reference>
<feature type="chain" id="PRO_0000181355" description="Ceramide kinase">
    <location>
        <begin position="1"/>
        <end position="531"/>
    </location>
</feature>
<feature type="domain" description="DAGKc" evidence="3">
    <location>
        <begin position="128"/>
        <end position="278"/>
    </location>
</feature>
<feature type="region of interest" description="Required for binding to sulfatide and phosphoinositides" evidence="1">
    <location>
        <begin position="1"/>
        <end position="125"/>
    </location>
</feature>
<feature type="region of interest" description="Essential for enzyme activity" evidence="1">
    <location>
        <begin position="1"/>
        <end position="115"/>
    </location>
</feature>
<feature type="active site" description="Proton donor/acceptor" evidence="2">
    <location>
        <position position="197"/>
    </location>
</feature>
<feature type="binding site" evidence="3">
    <location>
        <begin position="138"/>
        <end position="140"/>
    </location>
    <ligand>
        <name>ATP</name>
        <dbReference type="ChEBI" id="CHEBI:30616"/>
    </ligand>
</feature>
<feature type="binding site" evidence="3">
    <location>
        <begin position="170"/>
        <end position="174"/>
    </location>
    <ligand>
        <name>ATP</name>
        <dbReference type="ChEBI" id="CHEBI:30616"/>
    </ligand>
</feature>
<feature type="binding site" evidence="2">
    <location>
        <begin position="195"/>
        <end position="198"/>
    </location>
    <ligand>
        <name>substrate</name>
    </ligand>
</feature>
<feature type="binding site" evidence="3">
    <location>
        <position position="202"/>
    </location>
    <ligand>
        <name>ATP</name>
        <dbReference type="ChEBI" id="CHEBI:30616"/>
    </ligand>
</feature>
<feature type="binding site" evidence="3">
    <location>
        <begin position="239"/>
        <end position="241"/>
    </location>
    <ligand>
        <name>ATP</name>
        <dbReference type="ChEBI" id="CHEBI:30616"/>
    </ligand>
</feature>
<feature type="binding site" evidence="3">
    <location>
        <position position="304"/>
    </location>
    <ligand>
        <name>ATP</name>
        <dbReference type="ChEBI" id="CHEBI:30616"/>
    </ligand>
</feature>
<feature type="binding site" evidence="3">
    <location>
        <position position="310"/>
    </location>
    <ligand>
        <name>ATP</name>
        <dbReference type="ChEBI" id="CHEBI:30616"/>
    </ligand>
</feature>
<feature type="binding site" evidence="3">
    <location>
        <begin position="502"/>
        <end position="504"/>
    </location>
    <ligand>
        <name>ATP</name>
        <dbReference type="ChEBI" id="CHEBI:30616"/>
    </ligand>
</feature>
<feature type="modified residue" description="Phosphoserine" evidence="1">
    <location>
        <position position="340"/>
    </location>
</feature>
<feature type="modified residue" description="Phosphoserine" evidence="1">
    <location>
        <position position="408"/>
    </location>
</feature>
<feature type="sequence conflict" description="In Ref. 1; BAC01155." evidence="6" ref="1">
    <original>M</original>
    <variation>V</variation>
    <location>
        <position position="378"/>
    </location>
</feature>
<feature type="sequence conflict" description="In Ref. 2; BAC34908." evidence="6" ref="2">
    <original>D</original>
    <variation>Y</variation>
    <location>
        <position position="467"/>
    </location>
</feature>